<accession>P51743</accession>
<protein>
    <recommendedName>
        <fullName>Tumor necrosis factor</fullName>
    </recommendedName>
    <alternativeName>
        <fullName>Cachectin</fullName>
    </alternativeName>
    <alternativeName>
        <fullName>TNF-alpha</fullName>
    </alternativeName>
    <alternativeName>
        <fullName>Tumor necrosis factor ligand superfamily member 2</fullName>
        <shortName>TNF-a</shortName>
    </alternativeName>
    <component>
        <recommendedName>
            <fullName>Tumor necrosis factor, membrane form</fullName>
        </recommendedName>
        <alternativeName>
            <fullName>N-terminal fragment</fullName>
            <shortName>NTF</shortName>
        </alternativeName>
    </component>
    <component>
        <recommendedName>
            <fullName>Intracellular domain 1</fullName>
            <shortName>ICD1</shortName>
        </recommendedName>
    </component>
    <component>
        <recommendedName>
            <fullName>Intracellular domain 2</fullName>
            <shortName>ICD2</shortName>
        </recommendedName>
    </component>
    <component>
        <recommendedName>
            <fullName>C-domain 1</fullName>
        </recommendedName>
    </component>
    <component>
        <recommendedName>
            <fullName>C-domain 2</fullName>
        </recommendedName>
    </component>
    <component>
        <recommendedName>
            <fullName>Tumor necrosis factor, soluble form</fullName>
        </recommendedName>
    </component>
</protein>
<comment type="function">
    <text evidence="2 3">Cytokine that binds to TNFRSF1A/TNFR1 and TNFRSF1B/TNFBR. It is mainly secreted by macrophages and can induce cell death of certain tumor cell lines. It is potent pyrogen causing fever by direct action or by stimulation of interleukin-1 secretion and is implicated in the induction of cachexia, Under certain conditions it can stimulate cell proliferation and induce cell differentiation (By similarity). Induces insulin resistance in adipocytes via inhibition of insulin-induced IRS1 tyrosine phosphorylation and insulin-induced glucose uptake. Induces GKAP42 protein degradation in adipocytes which is partially responsible for TNF-induced insulin resistance (By similarity). Plays a role in angiogenesis by inducing VEGF production synergistically with IL1B and IL6 (By similarity). Promotes osteoclastogenesis and therefore mediates bone resorption (By similarity).</text>
</comment>
<comment type="function">
    <text evidence="2">The TNF intracellular domain (ICD) form induces IL12 production in dendritic cells.</text>
</comment>
<comment type="subunit">
    <text evidence="1">Homotrimer. Interacts with SPPL2B (By similarity).</text>
</comment>
<comment type="subcellular location">
    <subcellularLocation>
        <location evidence="1">Cell membrane</location>
        <topology evidence="1">Single-pass type II membrane protein</topology>
    </subcellularLocation>
</comment>
<comment type="subcellular location">
    <molecule>Tumor necrosis factor, membrane form</molecule>
    <subcellularLocation>
        <location evidence="1">Membrane</location>
        <topology evidence="1">Single-pass type II membrane protein</topology>
    </subcellularLocation>
</comment>
<comment type="subcellular location">
    <molecule>Tumor necrosis factor, soluble form</molecule>
    <subcellularLocation>
        <location evidence="1">Secreted</location>
    </subcellularLocation>
</comment>
<comment type="subcellular location">
    <molecule>C-domain 1</molecule>
    <subcellularLocation>
        <location evidence="1">Secreted</location>
    </subcellularLocation>
</comment>
<comment type="subcellular location">
    <molecule>C-domain 2</molecule>
    <subcellularLocation>
        <location evidence="1">Secreted</location>
    </subcellularLocation>
</comment>
<comment type="PTM">
    <text evidence="1">The soluble form derives from the membrane form by proteolytic processing. The membrane-bound form is further proteolytically processed by SPPL2A or SPPL2B through regulated intramembrane proteolysis producing TNF intracellular domains (ICD1 and ICD2) released in the cytosol and TNF C-domain 1 and C-domain 2 secreted into the extracellular space (By similarity).</text>
</comment>
<comment type="PTM">
    <text evidence="1">The membrane form, but not the soluble form, is phosphorylated on serine residues. Dephosphorylation of the membrane form occurs by binding to soluble TNFRSF1A/TNFR1 (By similarity).</text>
</comment>
<comment type="PTM">
    <text evidence="1">O-glycosylated; glycans contain galactose, N-acetylgalactosamine and N-acetylneuraminic acid.</text>
</comment>
<comment type="PTM">
    <molecule>Tumor necrosis factor, soluble form</molecule>
    <text evidence="2">The soluble form is demyristoylated by SIRT6, promoting its secretion.</text>
</comment>
<comment type="similarity">
    <text evidence="6">Belongs to the tumor necrosis factor family.</text>
</comment>
<reference key="1">
    <citation type="submission" date="1994-09" db="EMBL/GenBank/DDBJ databases">
        <title>Cloning and sequencing of cervine tumor necrosis factor.</title>
        <authorList>
            <person name="Lockhart E.A."/>
        </authorList>
    </citation>
    <scope>NUCLEOTIDE SEQUENCE [MRNA]</scope>
</reference>
<evidence type="ECO:0000250" key="1"/>
<evidence type="ECO:0000250" key="2">
    <source>
        <dbReference type="UniProtKB" id="P01375"/>
    </source>
</evidence>
<evidence type="ECO:0000250" key="3">
    <source>
        <dbReference type="UniProtKB" id="P06804"/>
    </source>
</evidence>
<evidence type="ECO:0000255" key="4"/>
<evidence type="ECO:0000255" key="5">
    <source>
        <dbReference type="PROSITE-ProRule" id="PRU01387"/>
    </source>
</evidence>
<evidence type="ECO:0000305" key="6"/>
<dbReference type="EMBL" id="U14683">
    <property type="protein sequence ID" value="AAA50759.1"/>
    <property type="molecule type" value="mRNA"/>
</dbReference>
<dbReference type="SMR" id="P51743"/>
<dbReference type="GlyCosmos" id="P51743">
    <property type="glycosylation" value="1 site, No reported glycans"/>
</dbReference>
<dbReference type="GO" id="GO:0009986">
    <property type="term" value="C:cell surface"/>
    <property type="evidence" value="ECO:0007669"/>
    <property type="project" value="TreeGrafter"/>
</dbReference>
<dbReference type="GO" id="GO:0005615">
    <property type="term" value="C:extracellular space"/>
    <property type="evidence" value="ECO:0007669"/>
    <property type="project" value="UniProtKB-KW"/>
</dbReference>
<dbReference type="GO" id="GO:0005886">
    <property type="term" value="C:plasma membrane"/>
    <property type="evidence" value="ECO:0007669"/>
    <property type="project" value="UniProtKB-SubCell"/>
</dbReference>
<dbReference type="GO" id="GO:0005125">
    <property type="term" value="F:cytokine activity"/>
    <property type="evidence" value="ECO:0007669"/>
    <property type="project" value="UniProtKB-KW"/>
</dbReference>
<dbReference type="GO" id="GO:0005164">
    <property type="term" value="F:tumor necrosis factor receptor binding"/>
    <property type="evidence" value="ECO:0007669"/>
    <property type="project" value="InterPro"/>
</dbReference>
<dbReference type="GO" id="GO:0008625">
    <property type="term" value="P:extrinsic apoptotic signaling pathway via death domain receptors"/>
    <property type="evidence" value="ECO:0007669"/>
    <property type="project" value="TreeGrafter"/>
</dbReference>
<dbReference type="GO" id="GO:0006955">
    <property type="term" value="P:immune response"/>
    <property type="evidence" value="ECO:0007669"/>
    <property type="project" value="InterPro"/>
</dbReference>
<dbReference type="GO" id="GO:0097527">
    <property type="term" value="P:necroptotic signaling pathway"/>
    <property type="evidence" value="ECO:0000250"/>
    <property type="project" value="CAFA"/>
</dbReference>
<dbReference type="GO" id="GO:0043242">
    <property type="term" value="P:negative regulation of protein-containing complex disassembly"/>
    <property type="evidence" value="ECO:0000250"/>
    <property type="project" value="UniProtKB"/>
</dbReference>
<dbReference type="GO" id="GO:0043065">
    <property type="term" value="P:positive regulation of apoptotic process"/>
    <property type="evidence" value="ECO:0000250"/>
    <property type="project" value="UniProtKB"/>
</dbReference>
<dbReference type="GO" id="GO:0043123">
    <property type="term" value="P:positive regulation of canonical NF-kappaB signal transduction"/>
    <property type="evidence" value="ECO:0007669"/>
    <property type="project" value="TreeGrafter"/>
</dbReference>
<dbReference type="GO" id="GO:2001238">
    <property type="term" value="P:positive regulation of extrinsic apoptotic signaling pathway"/>
    <property type="evidence" value="ECO:0007669"/>
    <property type="project" value="TreeGrafter"/>
</dbReference>
<dbReference type="GO" id="GO:0043507">
    <property type="term" value="P:positive regulation of JUN kinase activity"/>
    <property type="evidence" value="ECO:0000250"/>
    <property type="project" value="UniProtKB"/>
</dbReference>
<dbReference type="GO" id="GO:0043406">
    <property type="term" value="P:positive regulation of MAP kinase activity"/>
    <property type="evidence" value="ECO:0000250"/>
    <property type="project" value="UniProtKB"/>
</dbReference>
<dbReference type="GO" id="GO:0051092">
    <property type="term" value="P:positive regulation of NF-kappaB transcription factor activity"/>
    <property type="evidence" value="ECO:0000250"/>
    <property type="project" value="UniProtKB"/>
</dbReference>
<dbReference type="GO" id="GO:0001934">
    <property type="term" value="P:positive regulation of protein phosphorylation"/>
    <property type="evidence" value="ECO:0000250"/>
    <property type="project" value="UniProtKB"/>
</dbReference>
<dbReference type="GO" id="GO:0043243">
    <property type="term" value="P:positive regulation of protein-containing complex disassembly"/>
    <property type="evidence" value="ECO:0000250"/>
    <property type="project" value="UniProtKB"/>
</dbReference>
<dbReference type="GO" id="GO:0045944">
    <property type="term" value="P:positive regulation of transcription by RNA polymerase II"/>
    <property type="evidence" value="ECO:0007669"/>
    <property type="project" value="TreeGrafter"/>
</dbReference>
<dbReference type="GO" id="GO:0065008">
    <property type="term" value="P:regulation of biological quality"/>
    <property type="evidence" value="ECO:0007669"/>
    <property type="project" value="UniProtKB-ARBA"/>
</dbReference>
<dbReference type="GO" id="GO:0050793">
    <property type="term" value="P:regulation of developmental process"/>
    <property type="evidence" value="ECO:0007669"/>
    <property type="project" value="UniProtKB-ARBA"/>
</dbReference>
<dbReference type="GO" id="GO:0051239">
    <property type="term" value="P:regulation of multicellular organismal process"/>
    <property type="evidence" value="ECO:0007669"/>
    <property type="project" value="UniProtKB-ARBA"/>
</dbReference>
<dbReference type="GO" id="GO:0051046">
    <property type="term" value="P:regulation of secretion"/>
    <property type="evidence" value="ECO:0007669"/>
    <property type="project" value="UniProtKB-ARBA"/>
</dbReference>
<dbReference type="GO" id="GO:0033209">
    <property type="term" value="P:tumor necrosis factor-mediated signaling pathway"/>
    <property type="evidence" value="ECO:0007669"/>
    <property type="project" value="TreeGrafter"/>
</dbReference>
<dbReference type="GO" id="GO:0010573">
    <property type="term" value="P:vascular endothelial growth factor production"/>
    <property type="evidence" value="ECO:0000250"/>
    <property type="project" value="UniProtKB"/>
</dbReference>
<dbReference type="CDD" id="cd00184">
    <property type="entry name" value="TNF"/>
    <property type="match status" value="1"/>
</dbReference>
<dbReference type="FunFam" id="2.60.120.40:FF:000007">
    <property type="entry name" value="Tumor necrosis factor"/>
    <property type="match status" value="1"/>
</dbReference>
<dbReference type="Gene3D" id="2.60.120.40">
    <property type="match status" value="1"/>
</dbReference>
<dbReference type="InterPro" id="IPR006053">
    <property type="entry name" value="TNF"/>
</dbReference>
<dbReference type="InterPro" id="IPR002959">
    <property type="entry name" value="TNF_alpha"/>
</dbReference>
<dbReference type="InterPro" id="IPR021184">
    <property type="entry name" value="TNF_CS"/>
</dbReference>
<dbReference type="InterPro" id="IPR006052">
    <property type="entry name" value="TNF_dom"/>
</dbReference>
<dbReference type="InterPro" id="IPR008983">
    <property type="entry name" value="Tumour_necrosis_fac-like_dom"/>
</dbReference>
<dbReference type="PANTHER" id="PTHR11471:SF23">
    <property type="entry name" value="TUMOR NECROSIS FACTOR"/>
    <property type="match status" value="1"/>
</dbReference>
<dbReference type="PANTHER" id="PTHR11471">
    <property type="entry name" value="TUMOR NECROSIS FACTOR FAMILY MEMBER"/>
    <property type="match status" value="1"/>
</dbReference>
<dbReference type="Pfam" id="PF00229">
    <property type="entry name" value="TNF"/>
    <property type="match status" value="1"/>
</dbReference>
<dbReference type="PRINTS" id="PR01234">
    <property type="entry name" value="TNECROSISFCT"/>
</dbReference>
<dbReference type="PRINTS" id="PR01235">
    <property type="entry name" value="TNFALPHA"/>
</dbReference>
<dbReference type="SMART" id="SM00207">
    <property type="entry name" value="TNF"/>
    <property type="match status" value="1"/>
</dbReference>
<dbReference type="SUPFAM" id="SSF49842">
    <property type="entry name" value="TNF-like"/>
    <property type="match status" value="1"/>
</dbReference>
<dbReference type="PROSITE" id="PS00251">
    <property type="entry name" value="THD_1"/>
    <property type="match status" value="1"/>
</dbReference>
<dbReference type="PROSITE" id="PS50049">
    <property type="entry name" value="THD_2"/>
    <property type="match status" value="1"/>
</dbReference>
<keyword id="KW-1003">Cell membrane</keyword>
<keyword id="KW-0202">Cytokine</keyword>
<keyword id="KW-1015">Disulfide bond</keyword>
<keyword id="KW-0325">Glycoprotein</keyword>
<keyword id="KW-0449">Lipoprotein</keyword>
<keyword id="KW-0472">Membrane</keyword>
<keyword id="KW-0519">Myristate</keyword>
<keyword id="KW-0964">Secreted</keyword>
<keyword id="KW-0735">Signal-anchor</keyword>
<keyword id="KW-0812">Transmembrane</keyword>
<keyword id="KW-1133">Transmembrane helix</keyword>
<organism>
    <name type="scientific">Cervus elaphus</name>
    <name type="common">Red deer</name>
    <dbReference type="NCBI Taxonomy" id="9860"/>
    <lineage>
        <taxon>Eukaryota</taxon>
        <taxon>Metazoa</taxon>
        <taxon>Chordata</taxon>
        <taxon>Craniata</taxon>
        <taxon>Vertebrata</taxon>
        <taxon>Euteleostomi</taxon>
        <taxon>Mammalia</taxon>
        <taxon>Eutheria</taxon>
        <taxon>Laurasiatheria</taxon>
        <taxon>Artiodactyla</taxon>
        <taxon>Ruminantia</taxon>
        <taxon>Pecora</taxon>
        <taxon>Cervidae</taxon>
        <taxon>Cervinae</taxon>
        <taxon>Cervus</taxon>
    </lineage>
</organism>
<proteinExistence type="evidence at transcript level"/>
<gene>
    <name type="primary">TNF</name>
    <name type="synonym">TNFA</name>
    <name type="synonym">TNFSF2</name>
</gene>
<name>TNFA_CEREL</name>
<sequence>MIRDVELAEEALSKKAGGPQGSRSCLCLSLFSFLLVAGATTLFCLLHFGVIGPQREEQSPTGLSINSPLVQTLRSSSQASINKPVAHVVANINAQGQLLWLDSCANALMANGVKLEDNQLVVPTDGLYLIYSQVLFRGQSCPSTPLFLTHTISRIAVSYQTKVNILSAIKSPCHRETPEWAEAKPWYEPIYQGGVFQLEKGDRLSAEINLPDYLDYAESGQVYFGIIAL</sequence>
<feature type="chain" id="PRO_0000034415" description="Tumor necrosis factor, membrane form">
    <location>
        <begin position="1" status="less than"/>
        <end position="229"/>
    </location>
</feature>
<feature type="chain" id="PRO_0000417211" description="Intracellular domain 1" evidence="1">
    <location>
        <begin position="1" status="less than"/>
        <end position="39"/>
    </location>
</feature>
<feature type="chain" id="PRO_0000417212" description="Intracellular domain 2" evidence="1">
    <location>
        <begin position="1" status="less than"/>
        <end position="35"/>
    </location>
</feature>
<feature type="chain" id="PRO_0000417213" description="C-domain 1" evidence="1">
    <location>
        <begin position="45"/>
        <end status="unknown"/>
    </location>
</feature>
<feature type="chain" id="PRO_0000417214" description="C-domain 2" evidence="1">
    <location>
        <begin position="47"/>
        <end status="unknown"/>
    </location>
</feature>
<feature type="chain" id="PRO_0000034416" description="Tumor necrosis factor, soluble form">
    <location>
        <begin position="74"/>
        <end position="229"/>
    </location>
</feature>
<feature type="topological domain" description="Cytoplasmic" evidence="4">
    <location>
        <begin position="1" status="less than"/>
        <end position="30"/>
    </location>
</feature>
<feature type="transmembrane region" description="Helical; Signal-anchor for type II membrane protein" evidence="4">
    <location>
        <begin position="31"/>
        <end position="51"/>
    </location>
</feature>
<feature type="topological domain" description="Extracellular" evidence="4">
    <location>
        <begin position="52"/>
        <end position="229"/>
    </location>
</feature>
<feature type="domain" description="THD" evidence="5">
    <location>
        <begin position="84"/>
        <end position="229"/>
    </location>
</feature>
<feature type="site" description="Cleavage; by SPPL2A or SPPL2B" evidence="1">
    <location>
        <begin position="29"/>
        <end position="30"/>
    </location>
</feature>
<feature type="site" description="Cleavage; by SPPL2A or SPPL2B" evidence="1">
    <location>
        <begin position="34"/>
        <end position="35"/>
    </location>
</feature>
<feature type="site" description="Cleavage; by SPPL2A or SPPL2B" evidence="1">
    <location>
        <begin position="44"/>
        <end position="45"/>
    </location>
</feature>
<feature type="site" description="Cleavage; by SPPL2A or SPPL2B" evidence="1">
    <location>
        <begin position="46"/>
        <end position="47"/>
    </location>
</feature>
<feature type="site" description="Cleavage; by ADAM17" evidence="1">
    <location>
        <begin position="72"/>
        <end position="73"/>
    </location>
</feature>
<feature type="lipid moiety-binding region" description="N6-myristoyl lysine" evidence="2">
    <location>
        <position position="14"/>
    </location>
</feature>
<feature type="lipid moiety-binding region" description="N6-myristoyl lysine" evidence="2">
    <location>
        <position position="15"/>
    </location>
</feature>
<feature type="glycosylation site" description="O-linked (GalNAc...) serine; in soluble form" evidence="1">
    <location>
        <position position="76"/>
    </location>
</feature>
<feature type="disulfide bond" evidence="5">
    <location>
        <begin position="141"/>
        <end position="173"/>
    </location>
</feature>
<feature type="non-terminal residue">
    <location>
        <position position="1"/>
    </location>
</feature>